<accession>A0JPQ4</accession>
<reference evidence="9" key="1">
    <citation type="journal article" date="2004" name="Genome Res.">
        <title>The status, quality, and expansion of the NIH full-length cDNA project: the Mammalian Gene Collection (MGC).</title>
        <authorList>
            <consortium name="The MGC Project Team"/>
        </authorList>
    </citation>
    <scope>NUCLEOTIDE SEQUENCE [LARGE SCALE MRNA]</scope>
    <source>
        <tissue evidence="9">Heart</tissue>
    </source>
</reference>
<reference key="2">
    <citation type="journal article" date="2012" name="Nat. Commun.">
        <title>Quantitative maps of protein phosphorylation sites across 14 different rat organs and tissues.</title>
        <authorList>
            <person name="Lundby A."/>
            <person name="Secher A."/>
            <person name="Lage K."/>
            <person name="Nordsborg N.B."/>
            <person name="Dmytriyev A."/>
            <person name="Lundby C."/>
            <person name="Olsen J.V."/>
        </authorList>
    </citation>
    <scope>PHOSPHORYLATION [LARGE SCALE ANALYSIS] AT SER-255</scope>
    <scope>IDENTIFICATION BY MASS SPECTROMETRY [LARGE SCALE ANALYSIS]</scope>
</reference>
<keyword id="KW-1003">Cell membrane</keyword>
<keyword id="KW-0175">Coiled coil</keyword>
<keyword id="KW-0968">Cytoplasmic vesicle</keyword>
<keyword id="KW-1015">Disulfide bond</keyword>
<keyword id="KW-0268">Exocytosis</keyword>
<keyword id="KW-0472">Membrane</keyword>
<keyword id="KW-0479">Metal-binding</keyword>
<keyword id="KW-0597">Phosphoprotein</keyword>
<keyword id="KW-1185">Reference proteome</keyword>
<keyword id="KW-0702">S-nitrosylation</keyword>
<keyword id="KW-0808">Transferase</keyword>
<keyword id="KW-0813">Transport</keyword>
<keyword id="KW-0833">Ubl conjugation pathway</keyword>
<keyword id="KW-0862">Zinc</keyword>
<keyword id="KW-0863">Zinc-finger</keyword>
<evidence type="ECO:0000250" key="1"/>
<evidence type="ECO:0000250" key="2">
    <source>
        <dbReference type="UniProtKB" id="Q1XH17"/>
    </source>
</evidence>
<evidence type="ECO:0000250" key="3">
    <source>
        <dbReference type="UniProtKB" id="Q6ZMU5"/>
    </source>
</evidence>
<evidence type="ECO:0000250" key="4">
    <source>
        <dbReference type="UniProtKB" id="Q8N4X6"/>
    </source>
</evidence>
<evidence type="ECO:0000255" key="5"/>
<evidence type="ECO:0000255" key="6">
    <source>
        <dbReference type="PROSITE-ProRule" id="PRU00024"/>
    </source>
</evidence>
<evidence type="ECO:0000255" key="7">
    <source>
        <dbReference type="PROSITE-ProRule" id="PRU00175"/>
    </source>
</evidence>
<evidence type="ECO:0000255" key="8">
    <source>
        <dbReference type="PROSITE-ProRule" id="PRU00548"/>
    </source>
</evidence>
<evidence type="ECO:0000312" key="9">
    <source>
        <dbReference type="EMBL" id="AAI27540.1"/>
    </source>
</evidence>
<evidence type="ECO:0007744" key="10">
    <source>
    </source>
</evidence>
<feature type="chain" id="PRO_0000278133" description="Tripartite motif-containing protein 72">
    <location>
        <begin position="1"/>
        <end position="477"/>
    </location>
</feature>
<feature type="domain" description="B30.2/SPRY" evidence="8">
    <location>
        <begin position="271"/>
        <end position="475"/>
    </location>
</feature>
<feature type="zinc finger region" description="RING-type" evidence="7">
    <location>
        <begin position="14"/>
        <end position="57"/>
    </location>
</feature>
<feature type="zinc finger region" description="B box-type" evidence="6">
    <location>
        <begin position="81"/>
        <end position="122"/>
    </location>
</feature>
<feature type="coiled-coil region" evidence="2 5">
    <location>
        <begin position="135"/>
        <end position="232"/>
    </location>
</feature>
<feature type="binding site" evidence="2">
    <location>
        <position position="14"/>
    </location>
    <ligand>
        <name>Zn(2+)</name>
        <dbReference type="ChEBI" id="CHEBI:29105"/>
        <label>1</label>
        <note>structural for RING</note>
    </ligand>
</feature>
<feature type="binding site" evidence="2">
    <location>
        <position position="17"/>
    </location>
    <ligand>
        <name>Zn(2+)</name>
        <dbReference type="ChEBI" id="CHEBI:29105"/>
        <label>1</label>
        <note>structural for RING</note>
    </ligand>
</feature>
<feature type="binding site" evidence="2">
    <location>
        <position position="29"/>
    </location>
    <ligand>
        <name>Zn(2+)</name>
        <dbReference type="ChEBI" id="CHEBI:29105"/>
        <label>2</label>
        <note>structural for RING</note>
    </ligand>
</feature>
<feature type="binding site" evidence="2">
    <location>
        <position position="31"/>
    </location>
    <ligand>
        <name>Zn(2+)</name>
        <dbReference type="ChEBI" id="CHEBI:29105"/>
        <label>2</label>
        <note>structural for RING</note>
    </ligand>
</feature>
<feature type="binding site" evidence="2">
    <location>
        <position position="34"/>
    </location>
    <ligand>
        <name>Zn(2+)</name>
        <dbReference type="ChEBI" id="CHEBI:29105"/>
        <label>1</label>
        <note>structural for RING</note>
    </ligand>
</feature>
<feature type="binding site" evidence="2">
    <location>
        <position position="37"/>
    </location>
    <ligand>
        <name>Zn(2+)</name>
        <dbReference type="ChEBI" id="CHEBI:29105"/>
        <label>1</label>
        <note>structural for RING</note>
    </ligand>
</feature>
<feature type="binding site" evidence="2">
    <location>
        <position position="53"/>
    </location>
    <ligand>
        <name>Zn(2+)</name>
        <dbReference type="ChEBI" id="CHEBI:29105"/>
        <label>2</label>
        <note>structural for RING</note>
    </ligand>
</feature>
<feature type="binding site" evidence="2">
    <location>
        <position position="56"/>
    </location>
    <ligand>
        <name>Zn(2+)</name>
        <dbReference type="ChEBI" id="CHEBI:29105"/>
        <label>2</label>
        <note>structural for RING</note>
    </ligand>
</feature>
<feature type="binding site" evidence="2 6">
    <location>
        <position position="86"/>
    </location>
    <ligand>
        <name>Zn(2+)</name>
        <dbReference type="ChEBI" id="CHEBI:29105"/>
        <label>3</label>
        <note>structural for B-box</note>
    </ligand>
</feature>
<feature type="binding site" evidence="2 6">
    <location>
        <position position="89"/>
    </location>
    <ligand>
        <name>Zn(2+)</name>
        <dbReference type="ChEBI" id="CHEBI:29105"/>
        <label>3</label>
        <note>structural for B-box</note>
    </ligand>
</feature>
<feature type="binding site" evidence="2">
    <location>
        <position position="97"/>
    </location>
    <ligand>
        <name>Zn(2+)</name>
        <dbReference type="ChEBI" id="CHEBI:29105"/>
        <label>4</label>
        <note>structural for B-box</note>
    </ligand>
</feature>
<feature type="binding site" evidence="2">
    <location>
        <position position="100"/>
    </location>
    <ligand>
        <name>Zn(2+)</name>
        <dbReference type="ChEBI" id="CHEBI:29105"/>
        <label>4</label>
        <note>structural for B-box</note>
    </ligand>
</feature>
<feature type="binding site" evidence="2">
    <location>
        <position position="105"/>
    </location>
    <ligand>
        <name>Zn(2+)</name>
        <dbReference type="ChEBI" id="CHEBI:29105"/>
        <label>3</label>
        <note>structural for B-box</note>
    </ligand>
</feature>
<feature type="binding site" evidence="2 6">
    <location>
        <position position="108"/>
    </location>
    <ligand>
        <name>Zn(2+)</name>
        <dbReference type="ChEBI" id="CHEBI:29105"/>
        <label>3</label>
        <note>structural for B-box</note>
    </ligand>
</feature>
<feature type="binding site" evidence="2 6">
    <location>
        <position position="114"/>
    </location>
    <ligand>
        <name>Zn(2+)</name>
        <dbReference type="ChEBI" id="CHEBI:29105"/>
        <label>4</label>
        <note>structural for B-box</note>
    </ligand>
</feature>
<feature type="binding site" evidence="2">
    <location>
        <position position="117"/>
    </location>
    <ligand>
        <name>Zn(2+)</name>
        <dbReference type="ChEBI" id="CHEBI:29105"/>
        <label>4</label>
        <note>structural for B-box</note>
    </ligand>
</feature>
<feature type="modified residue" description="S-nitrosocysteine" evidence="3">
    <location>
        <position position="144"/>
    </location>
</feature>
<feature type="modified residue" description="Phosphoserine" evidence="10">
    <location>
        <position position="255"/>
    </location>
</feature>
<feature type="disulfide bond" description="Interchain" evidence="2">
    <location>
        <position position="242"/>
    </location>
</feature>
<sequence>MSTAPGLLRQELSCPLCLQLFDAPVTAECGHSFCRACLIRVAGEPADDGTVACPCCQASTRPQALSTNLQLARLVEGLAQVPQGHCEEHLDPLSIYCEQDRTLVCGVCASLGSHRGHRLLPAAEAHARLKTQLPQQKAQLQEACMRKEKSVAVLEHQLVEVEETVRQFRGAVGEQLGKMRMFLAALESSLDREAERVRGEAGVALRRELSSLNSYLEQLRQMEKVLEEVADKPQTEFLMKFCLVTSRLQKILSESPPPARLDIQLPVISDDFKFQVWKKMFRALMPELEELTFDPSSAHPSLVVSASGRRVECSEQKAPPAGEDTCQFDKTVAVVAKQLLSQGEHYWEVEVGDKPRWALGVMAADASRRGRLHAVPSQGLWLLGLRDGKILEAHVEAKEPRALRTPERPPARIGLYLSFADGVLTFYDASNTDALTPLFSFHERLPGPVYPMFDVCWHDKGKNSQPLLLVGPDSEQA</sequence>
<comment type="function">
    <text evidence="2">Muscle-specific E3 ubiquitin-protein ligase that plays a central role in cell membrane repair by nucleating the assembly of the repair machinery at injury sites (By similarity). Its ubiquitination activity is mediated by E2 ubiquitin-conjugating enzymes UBE2D1, UBE2D2 and UBE2D3 (By similarity). Acts as a sensor of oxidation: upon membrane damage, entry of extracellular oxidative environment results in disulfide bond formation and homooligomerization at the injury site (By similarity). This oligomerization acts as a nucleation site for recruitment of TRIM72-containing vesicles to the injury site, leading to membrane patch formation (By similarity). Probably acts upstream of the Ca(2+)-dependent membrane resealing process (By similarity). Required for transport of DYSF to sites of cell injury during repair patch formation (By similarity). Regulates membrane budding and exocytosis (By similarity). May be involved in the regulation of the mobility of KCNB1-containing endocytic vesicles (By similarity).</text>
</comment>
<comment type="catalytic activity">
    <reaction evidence="2">
        <text>S-ubiquitinyl-[E2 ubiquitin-conjugating enzyme]-L-cysteine + [acceptor protein]-L-lysine = [E2 ubiquitin-conjugating enzyme]-L-cysteine + N(6)-ubiquitinyl-[acceptor protein]-L-lysine.</text>
        <dbReference type="EC" id="2.3.2.27"/>
    </reaction>
</comment>
<comment type="activity regulation">
    <text evidence="2">Specifically binds phosphatidylserine (By similarity). The binding to phospholipids enhances ubiquitination activity (By similarity).</text>
</comment>
<comment type="pathway">
    <text evidence="2">Protein modification; protein ubiquitination.</text>
</comment>
<comment type="subunit">
    <text evidence="2">Homodimer (By similarity). Homooligomer; disulfide-linked (By similarity). Oligomerizes on the phospholipid membrane (By similarity). Interacts with DYSF and CAV3 (By similarity).</text>
</comment>
<comment type="subcellular location">
    <subcellularLocation>
        <location evidence="1">Cell membrane</location>
        <location evidence="1">Sarcolemma</location>
    </subcellularLocation>
    <subcellularLocation>
        <location evidence="3">Cytoplasmic vesicle membrane</location>
    </subcellularLocation>
    <text evidence="1">Tethered to plasma membrane and cytoplasmic vesicles via its interaction with phosphatidylserine.</text>
</comment>
<comment type="domain">
    <text evidence="2">The RING domain is flexible in both the dimer and oligomer (By similarity). Binding to the negatively charged phosphatidylserine lipids is mediated by the positively charged PRYSPRY domains and is inhibited by Ca(2+) (By similarity).</text>
</comment>
<comment type="PTM">
    <text evidence="1">Disulfide bond formation at Cys-242 occurs in case of membrane damage that cause the entry of the oxidized milieu of the extracellular space, resulting in homooligomerization.</text>
</comment>
<comment type="PTM">
    <text evidence="3">S-nitrosylation at Cys-144 stabilizes TRIM72 and protects against oxidation-induced protein degradation and cell death.</text>
</comment>
<comment type="similarity">
    <text evidence="5">Belongs to the TRIM/RBCC family.</text>
</comment>
<name>TRI72_RAT</name>
<dbReference type="EC" id="2.3.2.27" evidence="2"/>
<dbReference type="EMBL" id="BC127539">
    <property type="protein sequence ID" value="AAI27540.1"/>
    <property type="molecule type" value="mRNA"/>
</dbReference>
<dbReference type="RefSeq" id="NP_001071143.1">
    <property type="nucleotide sequence ID" value="NM_001077675.1"/>
</dbReference>
<dbReference type="SMR" id="A0JPQ4"/>
<dbReference type="BioGRID" id="265327">
    <property type="interactions" value="1"/>
</dbReference>
<dbReference type="FunCoup" id="A0JPQ4">
    <property type="interactions" value="7"/>
</dbReference>
<dbReference type="STRING" id="10116.ENSRNOP00000030976"/>
<dbReference type="iPTMnet" id="A0JPQ4"/>
<dbReference type="PhosphoSitePlus" id="A0JPQ4"/>
<dbReference type="PaxDb" id="10116-ENSRNOP00000030976"/>
<dbReference type="PeptideAtlas" id="A0JPQ4"/>
<dbReference type="Ensembl" id="ENSRNOT00000029994.7">
    <property type="protein sequence ID" value="ENSRNOP00000030976.4"/>
    <property type="gene ID" value="ENSRNOG00000022099.7"/>
</dbReference>
<dbReference type="GeneID" id="365377"/>
<dbReference type="KEGG" id="rno:365377"/>
<dbReference type="UCSC" id="RGD:1562778">
    <property type="organism name" value="rat"/>
</dbReference>
<dbReference type="AGR" id="RGD:1562778"/>
<dbReference type="CTD" id="493829"/>
<dbReference type="RGD" id="1562778">
    <property type="gene designation" value="Trim72"/>
</dbReference>
<dbReference type="eggNOG" id="KOG2177">
    <property type="taxonomic scope" value="Eukaryota"/>
</dbReference>
<dbReference type="GeneTree" id="ENSGT00940000161791"/>
<dbReference type="HOGENOM" id="CLU_013137_0_3_1"/>
<dbReference type="InParanoid" id="A0JPQ4"/>
<dbReference type="OMA" id="RLIQGMH"/>
<dbReference type="OrthoDB" id="6105938at2759"/>
<dbReference type="PhylomeDB" id="A0JPQ4"/>
<dbReference type="TreeFam" id="TF342569"/>
<dbReference type="UniPathway" id="UPA00143"/>
<dbReference type="PRO" id="PR:A0JPQ4"/>
<dbReference type="Proteomes" id="UP000002494">
    <property type="component" value="Chromosome 1"/>
</dbReference>
<dbReference type="Bgee" id="ENSRNOG00000022099">
    <property type="expression patterns" value="Expressed in skeletal muscle tissue and 9 other cell types or tissues"/>
</dbReference>
<dbReference type="GO" id="GO:0005737">
    <property type="term" value="C:cytoplasm"/>
    <property type="evidence" value="ECO:0000318"/>
    <property type="project" value="GO_Central"/>
</dbReference>
<dbReference type="GO" id="GO:0030659">
    <property type="term" value="C:cytoplasmic vesicle membrane"/>
    <property type="evidence" value="ECO:0000250"/>
    <property type="project" value="UniProtKB"/>
</dbReference>
<dbReference type="GO" id="GO:0042383">
    <property type="term" value="C:sarcolemma"/>
    <property type="evidence" value="ECO:0000250"/>
    <property type="project" value="UniProtKB"/>
</dbReference>
<dbReference type="GO" id="GO:0042802">
    <property type="term" value="F:identical protein binding"/>
    <property type="evidence" value="ECO:0000266"/>
    <property type="project" value="RGD"/>
</dbReference>
<dbReference type="GO" id="GO:0031435">
    <property type="term" value="F:mitogen-activated protein kinase kinase kinase binding"/>
    <property type="evidence" value="ECO:0000353"/>
    <property type="project" value="RGD"/>
</dbReference>
<dbReference type="GO" id="GO:0001786">
    <property type="term" value="F:phosphatidylserine binding"/>
    <property type="evidence" value="ECO:0000250"/>
    <property type="project" value="UniProtKB"/>
</dbReference>
<dbReference type="GO" id="GO:0031624">
    <property type="term" value="F:ubiquitin conjugating enzyme binding"/>
    <property type="evidence" value="ECO:0000266"/>
    <property type="project" value="RGD"/>
</dbReference>
<dbReference type="GO" id="GO:0061630">
    <property type="term" value="F:ubiquitin protein ligase activity"/>
    <property type="evidence" value="ECO:0000266"/>
    <property type="project" value="RGD"/>
</dbReference>
<dbReference type="GO" id="GO:0008270">
    <property type="term" value="F:zinc ion binding"/>
    <property type="evidence" value="ECO:0007669"/>
    <property type="project" value="UniProtKB-KW"/>
</dbReference>
<dbReference type="GO" id="GO:0006887">
    <property type="term" value="P:exocytosis"/>
    <property type="evidence" value="ECO:0007669"/>
    <property type="project" value="UniProtKB-KW"/>
</dbReference>
<dbReference type="GO" id="GO:0045087">
    <property type="term" value="P:innate immune response"/>
    <property type="evidence" value="ECO:0000318"/>
    <property type="project" value="GO_Central"/>
</dbReference>
<dbReference type="GO" id="GO:0007517">
    <property type="term" value="P:muscle organ development"/>
    <property type="evidence" value="ECO:0000250"/>
    <property type="project" value="UniProtKB"/>
</dbReference>
<dbReference type="GO" id="GO:0003012">
    <property type="term" value="P:muscle system process"/>
    <property type="evidence" value="ECO:0000250"/>
    <property type="project" value="UniProtKB"/>
</dbReference>
<dbReference type="GO" id="GO:0046627">
    <property type="term" value="P:negative regulation of insulin receptor signaling pathway"/>
    <property type="evidence" value="ECO:0000266"/>
    <property type="project" value="RGD"/>
</dbReference>
<dbReference type="GO" id="GO:0043569">
    <property type="term" value="P:negative regulation of insulin-like growth factor receptor signaling pathway"/>
    <property type="evidence" value="ECO:0000266"/>
    <property type="project" value="RGD"/>
</dbReference>
<dbReference type="GO" id="GO:0010832">
    <property type="term" value="P:negative regulation of myotube differentiation"/>
    <property type="evidence" value="ECO:0000266"/>
    <property type="project" value="RGD"/>
</dbReference>
<dbReference type="GO" id="GO:0001778">
    <property type="term" value="P:plasma membrane repair"/>
    <property type="evidence" value="ECO:0000250"/>
    <property type="project" value="UniProtKB"/>
</dbReference>
<dbReference type="GO" id="GO:0043161">
    <property type="term" value="P:proteasome-mediated ubiquitin-dependent protein catabolic process"/>
    <property type="evidence" value="ECO:0000266"/>
    <property type="project" value="RGD"/>
</dbReference>
<dbReference type="GO" id="GO:0051260">
    <property type="term" value="P:protein homooligomerization"/>
    <property type="evidence" value="ECO:0000250"/>
    <property type="project" value="UniProtKB"/>
</dbReference>
<dbReference type="FunFam" id="2.60.120.920:FF:000027">
    <property type="entry name" value="E3 ubiquitin-protein ligase TRIM50"/>
    <property type="match status" value="1"/>
</dbReference>
<dbReference type="FunFam" id="3.30.160.60:FF:001654">
    <property type="entry name" value="Tripartite motif-containing protein 72"/>
    <property type="match status" value="1"/>
</dbReference>
<dbReference type="FunFam" id="3.30.40.10:FF:000487">
    <property type="entry name" value="tripartite motif-containing protein 72"/>
    <property type="match status" value="1"/>
</dbReference>
<dbReference type="Gene3D" id="2.60.120.920">
    <property type="match status" value="1"/>
</dbReference>
<dbReference type="Gene3D" id="3.30.160.60">
    <property type="entry name" value="Classic Zinc Finger"/>
    <property type="match status" value="1"/>
</dbReference>
<dbReference type="Gene3D" id="3.30.40.10">
    <property type="entry name" value="Zinc/RING finger domain, C3HC4 (zinc finger)"/>
    <property type="match status" value="1"/>
</dbReference>
<dbReference type="InterPro" id="IPR001870">
    <property type="entry name" value="B30.2/SPRY"/>
</dbReference>
<dbReference type="InterPro" id="IPR043136">
    <property type="entry name" value="B30.2/SPRY_sf"/>
</dbReference>
<dbReference type="InterPro" id="IPR003879">
    <property type="entry name" value="Butyrophylin_SPRY"/>
</dbReference>
<dbReference type="InterPro" id="IPR013320">
    <property type="entry name" value="ConA-like_dom_sf"/>
</dbReference>
<dbReference type="InterPro" id="IPR006574">
    <property type="entry name" value="PRY"/>
</dbReference>
<dbReference type="InterPro" id="IPR003877">
    <property type="entry name" value="SPRY_dom"/>
</dbReference>
<dbReference type="InterPro" id="IPR050143">
    <property type="entry name" value="TRIM/RBCC"/>
</dbReference>
<dbReference type="InterPro" id="IPR000315">
    <property type="entry name" value="Znf_B-box"/>
</dbReference>
<dbReference type="InterPro" id="IPR001841">
    <property type="entry name" value="Znf_RING"/>
</dbReference>
<dbReference type="InterPro" id="IPR013083">
    <property type="entry name" value="Znf_RING/FYVE/PHD"/>
</dbReference>
<dbReference type="InterPro" id="IPR017907">
    <property type="entry name" value="Znf_RING_CS"/>
</dbReference>
<dbReference type="PANTHER" id="PTHR24103">
    <property type="entry name" value="E3 UBIQUITIN-PROTEIN LIGASE TRIM"/>
    <property type="match status" value="1"/>
</dbReference>
<dbReference type="Pfam" id="PF13765">
    <property type="entry name" value="PRY"/>
    <property type="match status" value="1"/>
</dbReference>
<dbReference type="Pfam" id="PF00622">
    <property type="entry name" value="SPRY"/>
    <property type="match status" value="1"/>
</dbReference>
<dbReference type="Pfam" id="PF00643">
    <property type="entry name" value="zf-B_box"/>
    <property type="match status" value="1"/>
</dbReference>
<dbReference type="Pfam" id="PF15227">
    <property type="entry name" value="zf-C3HC4_4"/>
    <property type="match status" value="1"/>
</dbReference>
<dbReference type="PRINTS" id="PR01407">
    <property type="entry name" value="BUTYPHLNCDUF"/>
</dbReference>
<dbReference type="SMART" id="SM00336">
    <property type="entry name" value="BBOX"/>
    <property type="match status" value="1"/>
</dbReference>
<dbReference type="SMART" id="SM00589">
    <property type="entry name" value="PRY"/>
    <property type="match status" value="1"/>
</dbReference>
<dbReference type="SMART" id="SM00184">
    <property type="entry name" value="RING"/>
    <property type="match status" value="1"/>
</dbReference>
<dbReference type="SMART" id="SM00449">
    <property type="entry name" value="SPRY"/>
    <property type="match status" value="1"/>
</dbReference>
<dbReference type="SUPFAM" id="SSF57845">
    <property type="entry name" value="B-box zinc-binding domain"/>
    <property type="match status" value="1"/>
</dbReference>
<dbReference type="SUPFAM" id="SSF49899">
    <property type="entry name" value="Concanavalin A-like lectins/glucanases"/>
    <property type="match status" value="1"/>
</dbReference>
<dbReference type="SUPFAM" id="SSF57850">
    <property type="entry name" value="RING/U-box"/>
    <property type="match status" value="1"/>
</dbReference>
<dbReference type="PROSITE" id="PS50188">
    <property type="entry name" value="B302_SPRY"/>
    <property type="match status" value="1"/>
</dbReference>
<dbReference type="PROSITE" id="PS50119">
    <property type="entry name" value="ZF_BBOX"/>
    <property type="match status" value="1"/>
</dbReference>
<dbReference type="PROSITE" id="PS00518">
    <property type="entry name" value="ZF_RING_1"/>
    <property type="match status" value="1"/>
</dbReference>
<dbReference type="PROSITE" id="PS50089">
    <property type="entry name" value="ZF_RING_2"/>
    <property type="match status" value="1"/>
</dbReference>
<organism>
    <name type="scientific">Rattus norvegicus</name>
    <name type="common">Rat</name>
    <dbReference type="NCBI Taxonomy" id="10116"/>
    <lineage>
        <taxon>Eukaryota</taxon>
        <taxon>Metazoa</taxon>
        <taxon>Chordata</taxon>
        <taxon>Craniata</taxon>
        <taxon>Vertebrata</taxon>
        <taxon>Euteleostomi</taxon>
        <taxon>Mammalia</taxon>
        <taxon>Eutheria</taxon>
        <taxon>Euarchontoglires</taxon>
        <taxon>Glires</taxon>
        <taxon>Rodentia</taxon>
        <taxon>Myomorpha</taxon>
        <taxon>Muroidea</taxon>
        <taxon>Muridae</taxon>
        <taxon>Murinae</taxon>
        <taxon>Rattus</taxon>
    </lineage>
</organism>
<proteinExistence type="evidence at protein level"/>
<gene>
    <name evidence="4" type="primary">Trim72</name>
    <name type="synonym">Mg53</name>
</gene>
<protein>
    <recommendedName>
        <fullName>Tripartite motif-containing protein 72</fullName>
        <ecNumber evidence="2">2.3.2.27</ecNumber>
    </recommendedName>
    <alternativeName>
        <fullName evidence="3">Mitsugumin-53</fullName>
        <shortName>Mg53</shortName>
    </alternativeName>
</protein>